<dbReference type="EMBL" id="AB082543">
    <property type="protein sequence ID" value="BAC16797.1"/>
    <property type="molecule type" value="Genomic_DNA"/>
</dbReference>
<dbReference type="EMBL" id="AAFI02000047">
    <property type="protein sequence ID" value="EAL66270.1"/>
    <property type="molecule type" value="Genomic_DNA"/>
</dbReference>
<dbReference type="RefSeq" id="XP_640259.1">
    <property type="nucleotide sequence ID" value="XM_635167.1"/>
</dbReference>
<dbReference type="SMR" id="Q54SP2"/>
<dbReference type="FunCoup" id="Q54SP2">
    <property type="interactions" value="1"/>
</dbReference>
<dbReference type="STRING" id="44689.Q54SP2"/>
<dbReference type="GlyGen" id="Q54SP2">
    <property type="glycosylation" value="1 site"/>
</dbReference>
<dbReference type="PaxDb" id="44689-DDB0215000"/>
<dbReference type="EnsemblProtists" id="EAL66270">
    <property type="protein sequence ID" value="EAL66270"/>
    <property type="gene ID" value="DDB_G0282297"/>
</dbReference>
<dbReference type="GeneID" id="8623518"/>
<dbReference type="KEGG" id="ddi:DDB_G0282297"/>
<dbReference type="dictyBase" id="DDB_G0282297">
    <property type="gene designation" value="forB"/>
</dbReference>
<dbReference type="VEuPathDB" id="AmoebaDB:DDB_G0282297"/>
<dbReference type="eggNOG" id="KOG1922">
    <property type="taxonomic scope" value="Eukaryota"/>
</dbReference>
<dbReference type="eggNOG" id="KOG1923">
    <property type="taxonomic scope" value="Eukaryota"/>
</dbReference>
<dbReference type="HOGENOM" id="CLU_279717_0_0_1"/>
<dbReference type="InParanoid" id="Q54SP2"/>
<dbReference type="OMA" id="SLEFRMH"/>
<dbReference type="PhylomeDB" id="Q54SP2"/>
<dbReference type="PRO" id="PR:Q54SP2"/>
<dbReference type="Proteomes" id="UP000002195">
    <property type="component" value="Chromosome 3"/>
</dbReference>
<dbReference type="GO" id="GO:0015629">
    <property type="term" value="C:actin cytoskeleton"/>
    <property type="evidence" value="ECO:0000318"/>
    <property type="project" value="GO_Central"/>
</dbReference>
<dbReference type="GO" id="GO:0070685">
    <property type="term" value="C:macropinocytic cup"/>
    <property type="evidence" value="ECO:0000314"/>
    <property type="project" value="dictyBase"/>
</dbReference>
<dbReference type="GO" id="GO:0097204">
    <property type="term" value="C:phagocytic cup base"/>
    <property type="evidence" value="ECO:0000314"/>
    <property type="project" value="dictyBase"/>
</dbReference>
<dbReference type="GO" id="GO:0051015">
    <property type="term" value="F:actin filament binding"/>
    <property type="evidence" value="ECO:0000318"/>
    <property type="project" value="GO_Central"/>
</dbReference>
<dbReference type="GO" id="GO:0005522">
    <property type="term" value="F:profilin binding"/>
    <property type="evidence" value="ECO:0000250"/>
    <property type="project" value="dictyBase"/>
</dbReference>
<dbReference type="GO" id="GO:0031267">
    <property type="term" value="F:small GTPase binding"/>
    <property type="evidence" value="ECO:0007669"/>
    <property type="project" value="InterPro"/>
</dbReference>
<dbReference type="GO" id="GO:0070060">
    <property type="term" value="P:'de novo' actin filament nucleation"/>
    <property type="evidence" value="ECO:0000314"/>
    <property type="project" value="dictyBase"/>
</dbReference>
<dbReference type="GO" id="GO:0030041">
    <property type="term" value="P:actin filament polymerization"/>
    <property type="evidence" value="ECO:0000318"/>
    <property type="project" value="GO_Central"/>
</dbReference>
<dbReference type="GO" id="GO:0030866">
    <property type="term" value="P:cortical actin cytoskeleton organization"/>
    <property type="evidence" value="ECO:0000316"/>
    <property type="project" value="dictyBase"/>
</dbReference>
<dbReference type="GO" id="GO:0006911">
    <property type="term" value="P:phagocytosis, engulfment"/>
    <property type="evidence" value="ECO:0000316"/>
    <property type="project" value="dictyBase"/>
</dbReference>
<dbReference type="FunFam" id="1.20.58.2220:FF:000028">
    <property type="entry name" value="Formin-D"/>
    <property type="match status" value="1"/>
</dbReference>
<dbReference type="Gene3D" id="1.20.58.2220">
    <property type="entry name" value="Formin, FH2 domain"/>
    <property type="match status" value="1"/>
</dbReference>
<dbReference type="Gene3D" id="1.25.10.10">
    <property type="entry name" value="Leucine-rich Repeat Variant"/>
    <property type="match status" value="1"/>
</dbReference>
<dbReference type="InterPro" id="IPR011989">
    <property type="entry name" value="ARM-like"/>
</dbReference>
<dbReference type="InterPro" id="IPR016024">
    <property type="entry name" value="ARM-type_fold"/>
</dbReference>
<dbReference type="InterPro" id="IPR014767">
    <property type="entry name" value="DAD_dom"/>
</dbReference>
<dbReference type="InterPro" id="IPR015425">
    <property type="entry name" value="FH2_Formin"/>
</dbReference>
<dbReference type="InterPro" id="IPR042201">
    <property type="entry name" value="FH2_Formin_sf"/>
</dbReference>
<dbReference type="InterPro" id="IPR010472">
    <property type="entry name" value="FH3_dom"/>
</dbReference>
<dbReference type="InterPro" id="IPR051425">
    <property type="entry name" value="Formin_Homology"/>
</dbReference>
<dbReference type="InterPro" id="IPR014768">
    <property type="entry name" value="GBD/FH3_dom"/>
</dbReference>
<dbReference type="InterPro" id="IPR010473">
    <property type="entry name" value="GTPase-bd"/>
</dbReference>
<dbReference type="PANTHER" id="PTHR45725">
    <property type="entry name" value="FORMIN HOMOLOGY 2 FAMILY MEMBER"/>
    <property type="match status" value="1"/>
</dbReference>
<dbReference type="PANTHER" id="PTHR45725:SF8">
    <property type="entry name" value="FORMIN-B"/>
    <property type="match status" value="1"/>
</dbReference>
<dbReference type="Pfam" id="PF06367">
    <property type="entry name" value="Drf_FH3"/>
    <property type="match status" value="1"/>
</dbReference>
<dbReference type="Pfam" id="PF06371">
    <property type="entry name" value="Drf_GBD"/>
    <property type="match status" value="1"/>
</dbReference>
<dbReference type="Pfam" id="PF02181">
    <property type="entry name" value="FH2"/>
    <property type="match status" value="1"/>
</dbReference>
<dbReference type="PRINTS" id="PR01217">
    <property type="entry name" value="PRICHEXTENSN"/>
</dbReference>
<dbReference type="SMART" id="SM01139">
    <property type="entry name" value="Drf_FH3"/>
    <property type="match status" value="1"/>
</dbReference>
<dbReference type="SMART" id="SM01140">
    <property type="entry name" value="Drf_GBD"/>
    <property type="match status" value="1"/>
</dbReference>
<dbReference type="SMART" id="SM00498">
    <property type="entry name" value="FH2"/>
    <property type="match status" value="1"/>
</dbReference>
<dbReference type="SUPFAM" id="SSF48371">
    <property type="entry name" value="ARM repeat"/>
    <property type="match status" value="1"/>
</dbReference>
<dbReference type="SUPFAM" id="SSF101447">
    <property type="entry name" value="Formin homology 2 domain (FH2 domain)"/>
    <property type="match status" value="1"/>
</dbReference>
<dbReference type="PROSITE" id="PS51231">
    <property type="entry name" value="DAD"/>
    <property type="match status" value="1"/>
</dbReference>
<dbReference type="PROSITE" id="PS51444">
    <property type="entry name" value="FH2"/>
    <property type="match status" value="1"/>
</dbReference>
<dbReference type="PROSITE" id="PS51232">
    <property type="entry name" value="GBD_FH3"/>
    <property type="match status" value="1"/>
</dbReference>
<sequence length="1126" mass="123608">MFFKGKKKDKEKEKSHGNIGNVISVENKTGSQSNLHVEQNLSNEDLKIQFSQLLYELGVPEAKRVEMELWSNDKKWMLLVQNKDKIKENEEKMKQKGSLYETPQFYLSLLRENASIQKTISDLKVSLASNKLSWIDSFIGLSGFDEILKIFQTFQLKPEKNSIDFLILFDCVNIIKSILNSQSGVKSVMTTSHTFKVLVLCLDQSYPPELRNAVLQLTAALTLLPTVGHSYVLEAIENFKVSNREKVRFQTIIEGAKSVSNTQLHYEYLTSFMNLVNSIVNSPADLQVRIGLRSEFTALKLIELISNSKGVSEDLDTQINLFFECMEEDNDEVGAHYKEVNIRSPSEVSTKIDTLLQSHPALHHHFISIIKGLYTLASTQSDLGGSMWNILDESVGLILKDPSKESQLEKLQNENNNLKLQLSEIKLNNSNNNNNNNNSNNNNNDSNVSTPNINTGSPLLPPQQYQDLEQKLQLTQNEKNESQNKVKQLESEIKGLNSTLTGLQLKVTKLEADLLSVSVTTPPSDTNGTTSPPIEAPSSPSLGAPPPPPPPPPAPPVSGGGPPPPPPPPPPSSGGGPPPPPPPPSSGGPPPPPPPPGGMKKPGAPAVPNLPPKKSSVPSVKMVGLQWKKVNNNVIENSIWMNVKDYNLNDQFKQLEELFQVKKPTATTPTAPVGGASNVAVGGGSGSKSIVSTPTISILDPKRSQAIMIMLSRFKISFPDLSKAITNLDESKLNLEDAKSLLKFVPSSEEIELLKEEDPSCFGKPEQFLWELSKINRISEKLECFIFKQKLSTQIEELTPDINALLKGSMETKNNKSFHQILEIVLSLGNFINGGTPRGDIYGFKLDSLSGLLDCRSPSDSKVTLMTWLIQFLENKHPSLLEFHQEFTAIDEAKRVSIQNLRSEVASLKKGLTLLTNEVEKSEGASKTILSGFVGKSTDAVTLIEKQFNTALESFNSTVQFYGEDVKTSSPEEFFQHVSKFKNEFKRTIESIQKERENVQKLAARKKAAASGPSVPSASGSSINIAPKSGVSPITPTSKSSISISQKPPQSTQPSISVQQQQQQHHGDDDDDIPQNGTFMDQLMSKMKGGEAIRASRRASQYVFTQNGAGGVGAIDALNAALKNKK</sequence>
<gene>
    <name type="primary">forB</name>
    <name type="ORF">DDB_G0282297</name>
</gene>
<protein>
    <recommendedName>
        <fullName>Formin-B</fullName>
    </recommendedName>
</protein>
<keyword id="KW-0009">Actin-binding</keyword>
<keyword id="KW-0175">Coiled coil</keyword>
<keyword id="KW-1185">Reference proteome</keyword>
<comment type="function">
    <text evidence="1">Formins play an important role in the nucleation of actin and the formation of linear actin filaments.</text>
</comment>
<comment type="subunit">
    <text evidence="7 9">Interacts (via GBD/FH3 domain) with activated Rho-GTPases. Interacts with pfyA and pfyB.</text>
</comment>
<comment type="developmental stage">
    <text evidence="8">Expression decreases after the onset of development.</text>
</comment>
<comment type="domain">
    <text evidence="1">The DAD domain regulates activation via by an autoinhibitory interaction with the GBD/FH3 domain. This autoinhibition is released upon competitive binding of an activated GTPase. The release of DAD allows the FH2 domain to then nucleate and elongate nonbranched actin filaments (By similarity).</text>
</comment>
<comment type="disruption phenotype">
    <text evidence="7">No visible phenotype. ForA and forB double null cells also show no phenotype.</text>
</comment>
<comment type="similarity">
    <text evidence="10">Belongs to the formin homology family. Diaphanous subfamily.</text>
</comment>
<organism>
    <name type="scientific">Dictyostelium discoideum</name>
    <name type="common">Social amoeba</name>
    <dbReference type="NCBI Taxonomy" id="44689"/>
    <lineage>
        <taxon>Eukaryota</taxon>
        <taxon>Amoebozoa</taxon>
        <taxon>Evosea</taxon>
        <taxon>Eumycetozoa</taxon>
        <taxon>Dictyostelia</taxon>
        <taxon>Dictyosteliales</taxon>
        <taxon>Dictyosteliaceae</taxon>
        <taxon>Dictyostelium</taxon>
    </lineage>
</organism>
<feature type="chain" id="PRO_0000363914" description="Formin-B">
    <location>
        <begin position="1"/>
        <end position="1126"/>
    </location>
</feature>
<feature type="domain" description="GBD/FH3" evidence="4">
    <location>
        <begin position="38"/>
        <end position="406"/>
    </location>
</feature>
<feature type="domain" description="FH1">
    <location>
        <begin position="527"/>
        <end position="611"/>
    </location>
</feature>
<feature type="domain" description="FH2" evidence="5">
    <location>
        <begin position="612"/>
        <end position="1011"/>
    </location>
</feature>
<feature type="domain" description="DAD" evidence="3">
    <location>
        <begin position="1071"/>
        <end position="1100"/>
    </location>
</feature>
<feature type="region of interest" description="Disordered" evidence="6">
    <location>
        <begin position="1"/>
        <end position="21"/>
    </location>
</feature>
<feature type="region of interest" description="Disordered" evidence="6">
    <location>
        <begin position="427"/>
        <end position="462"/>
    </location>
</feature>
<feature type="region of interest" description="Disordered" evidence="6">
    <location>
        <begin position="518"/>
        <end position="619"/>
    </location>
</feature>
<feature type="region of interest" description="Disordered" evidence="6">
    <location>
        <begin position="1004"/>
        <end position="1078"/>
    </location>
</feature>
<feature type="coiled-coil region" evidence="2">
    <location>
        <begin position="463"/>
        <end position="514"/>
    </location>
</feature>
<feature type="coiled-coil region" evidence="2">
    <location>
        <begin position="980"/>
        <end position="1010"/>
    </location>
</feature>
<feature type="compositionally biased region" description="Low complexity" evidence="6">
    <location>
        <begin position="427"/>
        <end position="447"/>
    </location>
</feature>
<feature type="compositionally biased region" description="Polar residues" evidence="6">
    <location>
        <begin position="448"/>
        <end position="462"/>
    </location>
</feature>
<feature type="compositionally biased region" description="Polar residues" evidence="6">
    <location>
        <begin position="518"/>
        <end position="532"/>
    </location>
</feature>
<feature type="compositionally biased region" description="Pro residues" evidence="6">
    <location>
        <begin position="543"/>
        <end position="597"/>
    </location>
</feature>
<feature type="compositionally biased region" description="Low complexity" evidence="6">
    <location>
        <begin position="598"/>
        <end position="607"/>
    </location>
</feature>
<feature type="compositionally biased region" description="Low complexity" evidence="6">
    <location>
        <begin position="1009"/>
        <end position="1022"/>
    </location>
</feature>
<feature type="compositionally biased region" description="Low complexity" evidence="6">
    <location>
        <begin position="1032"/>
        <end position="1064"/>
    </location>
</feature>
<feature type="sequence conflict" description="In Ref. 1; BAC16797." evidence="10" ref="1">
    <original>K</original>
    <variation>N</variation>
    <location>
        <position position="240"/>
    </location>
</feature>
<reference key="1">
    <citation type="journal article" date="2003" name="J. Cell Sci.">
        <title>ForC, a novel type of formin family protein lacking an FH1 domain, is involved in multicellular development in Dictyostelium discoideum.</title>
        <authorList>
            <person name="Kitayama C."/>
            <person name="Uyeda T.Q.P."/>
        </authorList>
    </citation>
    <scope>NUCLEOTIDE SEQUENCE [MRNA]</scope>
    <scope>DISRUPTION PHENOTYPE</scope>
    <scope>INTERACTION WITH PFYA AND PFYB</scope>
</reference>
<reference key="2">
    <citation type="journal article" date="2005" name="Nature">
        <title>The genome of the social amoeba Dictyostelium discoideum.</title>
        <authorList>
            <person name="Eichinger L."/>
            <person name="Pachebat J.A."/>
            <person name="Gloeckner G."/>
            <person name="Rajandream M.A."/>
            <person name="Sucgang R."/>
            <person name="Berriman M."/>
            <person name="Song J."/>
            <person name="Olsen R."/>
            <person name="Szafranski K."/>
            <person name="Xu Q."/>
            <person name="Tunggal B."/>
            <person name="Kummerfeld S."/>
            <person name="Madera M."/>
            <person name="Konfortov B.A."/>
            <person name="Rivero F."/>
            <person name="Bankier A.T."/>
            <person name="Lehmann R."/>
            <person name="Hamlin N."/>
            <person name="Davies R."/>
            <person name="Gaudet P."/>
            <person name="Fey P."/>
            <person name="Pilcher K."/>
            <person name="Chen G."/>
            <person name="Saunders D."/>
            <person name="Sodergren E.J."/>
            <person name="Davis P."/>
            <person name="Kerhornou A."/>
            <person name="Nie X."/>
            <person name="Hall N."/>
            <person name="Anjard C."/>
            <person name="Hemphill L."/>
            <person name="Bason N."/>
            <person name="Farbrother P."/>
            <person name="Desany B."/>
            <person name="Just E."/>
            <person name="Morio T."/>
            <person name="Rost R."/>
            <person name="Churcher C.M."/>
            <person name="Cooper J."/>
            <person name="Haydock S."/>
            <person name="van Driessche N."/>
            <person name="Cronin A."/>
            <person name="Goodhead I."/>
            <person name="Muzny D.M."/>
            <person name="Mourier T."/>
            <person name="Pain A."/>
            <person name="Lu M."/>
            <person name="Harper D."/>
            <person name="Lindsay R."/>
            <person name="Hauser H."/>
            <person name="James K.D."/>
            <person name="Quiles M."/>
            <person name="Madan Babu M."/>
            <person name="Saito T."/>
            <person name="Buchrieser C."/>
            <person name="Wardroper A."/>
            <person name="Felder M."/>
            <person name="Thangavelu M."/>
            <person name="Johnson D."/>
            <person name="Knights A."/>
            <person name="Loulseged H."/>
            <person name="Mungall K.L."/>
            <person name="Oliver K."/>
            <person name="Price C."/>
            <person name="Quail M.A."/>
            <person name="Urushihara H."/>
            <person name="Hernandez J."/>
            <person name="Rabbinowitsch E."/>
            <person name="Steffen D."/>
            <person name="Sanders M."/>
            <person name="Ma J."/>
            <person name="Kohara Y."/>
            <person name="Sharp S."/>
            <person name="Simmonds M.N."/>
            <person name="Spiegler S."/>
            <person name="Tivey A."/>
            <person name="Sugano S."/>
            <person name="White B."/>
            <person name="Walker D."/>
            <person name="Woodward J.R."/>
            <person name="Winckler T."/>
            <person name="Tanaka Y."/>
            <person name="Shaulsky G."/>
            <person name="Schleicher M."/>
            <person name="Weinstock G.M."/>
            <person name="Rosenthal A."/>
            <person name="Cox E.C."/>
            <person name="Chisholm R.L."/>
            <person name="Gibbs R.A."/>
            <person name="Loomis W.F."/>
            <person name="Platzer M."/>
            <person name="Kay R.R."/>
            <person name="Williams J.G."/>
            <person name="Dear P.H."/>
            <person name="Noegel A.A."/>
            <person name="Barrell B.G."/>
            <person name="Kuspa A."/>
        </authorList>
    </citation>
    <scope>NUCLEOTIDE SEQUENCE [LARGE SCALE GENOMIC DNA]</scope>
    <source>
        <strain>AX4</strain>
    </source>
</reference>
<reference key="3">
    <citation type="journal article" date="2004" name="Protoplasma">
        <title>Evolutionarily conserved modules in actin nucleation: lessons from Dictyostelium discoideum and plants. Review article.</title>
        <authorList>
            <person name="Cvrckova F."/>
            <person name="Rivero F."/>
            <person name="Bavlnka B."/>
        </authorList>
    </citation>
    <scope>NOMENCLATURE</scope>
</reference>
<reference key="4">
    <citation type="journal article" date="2005" name="BMC Genomics">
        <title>A comparative sequence analysis reveals a common GBD/FH3-FH1-FH2-DAD architecture in formins from Dictyostelium, fungi and metazoa.</title>
        <authorList>
            <person name="Rivero F."/>
            <person name="Muramoto T."/>
            <person name="Meyer A.-K."/>
            <person name="Urushihara H."/>
            <person name="Uyeda T.Q.P."/>
            <person name="Kitayama C."/>
        </authorList>
    </citation>
    <scope>DEVELOPMENTAL STAGE</scope>
</reference>
<reference key="5">
    <citation type="journal article" date="2006" name="Eur. J. Cell Biol.">
        <title>Rho GTPase signaling in Dictyostelium discoideum: insights from the genome.</title>
        <authorList>
            <person name="Vlahou G."/>
            <person name="Rivero F."/>
        </authorList>
    </citation>
    <scope>INTERACTION WITH RHO GTPASE</scope>
</reference>
<evidence type="ECO:0000250" key="1"/>
<evidence type="ECO:0000255" key="2"/>
<evidence type="ECO:0000255" key="3">
    <source>
        <dbReference type="PROSITE-ProRule" id="PRU00577"/>
    </source>
</evidence>
<evidence type="ECO:0000255" key="4">
    <source>
        <dbReference type="PROSITE-ProRule" id="PRU00579"/>
    </source>
</evidence>
<evidence type="ECO:0000255" key="5">
    <source>
        <dbReference type="PROSITE-ProRule" id="PRU00774"/>
    </source>
</evidence>
<evidence type="ECO:0000256" key="6">
    <source>
        <dbReference type="SAM" id="MobiDB-lite"/>
    </source>
</evidence>
<evidence type="ECO:0000269" key="7">
    <source>
    </source>
</evidence>
<evidence type="ECO:0000269" key="8">
    <source>
    </source>
</evidence>
<evidence type="ECO:0000269" key="9">
    <source>
    </source>
</evidence>
<evidence type="ECO:0000305" key="10"/>
<proteinExistence type="evidence at protein level"/>
<accession>Q54SP2</accession>
<accession>Q8IU41</accession>
<name>FORB_DICDI</name>